<organism>
    <name type="scientific">Caldicellulosiruptor saccharolyticus (strain ATCC 43494 / DSM 8903 / Tp8T 6331)</name>
    <dbReference type="NCBI Taxonomy" id="351627"/>
    <lineage>
        <taxon>Bacteria</taxon>
        <taxon>Bacillati</taxon>
        <taxon>Bacillota</taxon>
        <taxon>Bacillota incertae sedis</taxon>
        <taxon>Caldicellulosiruptorales</taxon>
        <taxon>Caldicellulosiruptoraceae</taxon>
        <taxon>Caldicellulosiruptor</taxon>
    </lineage>
</organism>
<evidence type="ECO:0000255" key="1">
    <source>
        <dbReference type="HAMAP-Rule" id="MF_01342"/>
    </source>
</evidence>
<evidence type="ECO:0000305" key="2"/>
<gene>
    <name evidence="1" type="primary">rplP</name>
    <name type="ordered locus">Csac_2280</name>
</gene>
<feature type="chain" id="PRO_1000054595" description="Large ribosomal subunit protein uL16">
    <location>
        <begin position="1"/>
        <end position="147"/>
    </location>
</feature>
<dbReference type="EMBL" id="CP000679">
    <property type="protein sequence ID" value="ABP67858.1"/>
    <property type="molecule type" value="Genomic_DNA"/>
</dbReference>
<dbReference type="RefSeq" id="WP_011917784.1">
    <property type="nucleotide sequence ID" value="NC_009437.1"/>
</dbReference>
<dbReference type="SMR" id="A4XLS3"/>
<dbReference type="STRING" id="351627.Csac_2280"/>
<dbReference type="KEGG" id="csc:Csac_2280"/>
<dbReference type="eggNOG" id="COG0197">
    <property type="taxonomic scope" value="Bacteria"/>
</dbReference>
<dbReference type="HOGENOM" id="CLU_078858_2_1_9"/>
<dbReference type="OrthoDB" id="9802589at2"/>
<dbReference type="Proteomes" id="UP000000256">
    <property type="component" value="Chromosome"/>
</dbReference>
<dbReference type="GO" id="GO:0022625">
    <property type="term" value="C:cytosolic large ribosomal subunit"/>
    <property type="evidence" value="ECO:0007669"/>
    <property type="project" value="TreeGrafter"/>
</dbReference>
<dbReference type="GO" id="GO:0019843">
    <property type="term" value="F:rRNA binding"/>
    <property type="evidence" value="ECO:0007669"/>
    <property type="project" value="UniProtKB-UniRule"/>
</dbReference>
<dbReference type="GO" id="GO:0003735">
    <property type="term" value="F:structural constituent of ribosome"/>
    <property type="evidence" value="ECO:0007669"/>
    <property type="project" value="InterPro"/>
</dbReference>
<dbReference type="GO" id="GO:0000049">
    <property type="term" value="F:tRNA binding"/>
    <property type="evidence" value="ECO:0007669"/>
    <property type="project" value="UniProtKB-KW"/>
</dbReference>
<dbReference type="GO" id="GO:0006412">
    <property type="term" value="P:translation"/>
    <property type="evidence" value="ECO:0007669"/>
    <property type="project" value="UniProtKB-UniRule"/>
</dbReference>
<dbReference type="CDD" id="cd01433">
    <property type="entry name" value="Ribosomal_L16_L10e"/>
    <property type="match status" value="1"/>
</dbReference>
<dbReference type="FunFam" id="3.90.1170.10:FF:000001">
    <property type="entry name" value="50S ribosomal protein L16"/>
    <property type="match status" value="1"/>
</dbReference>
<dbReference type="Gene3D" id="3.90.1170.10">
    <property type="entry name" value="Ribosomal protein L10e/L16"/>
    <property type="match status" value="1"/>
</dbReference>
<dbReference type="HAMAP" id="MF_01342">
    <property type="entry name" value="Ribosomal_uL16"/>
    <property type="match status" value="1"/>
</dbReference>
<dbReference type="InterPro" id="IPR047873">
    <property type="entry name" value="Ribosomal_uL16"/>
</dbReference>
<dbReference type="InterPro" id="IPR000114">
    <property type="entry name" value="Ribosomal_uL16_bact-type"/>
</dbReference>
<dbReference type="InterPro" id="IPR020798">
    <property type="entry name" value="Ribosomal_uL16_CS"/>
</dbReference>
<dbReference type="InterPro" id="IPR016180">
    <property type="entry name" value="Ribosomal_uL16_dom"/>
</dbReference>
<dbReference type="InterPro" id="IPR036920">
    <property type="entry name" value="Ribosomal_uL16_sf"/>
</dbReference>
<dbReference type="NCBIfam" id="TIGR01164">
    <property type="entry name" value="rplP_bact"/>
    <property type="match status" value="1"/>
</dbReference>
<dbReference type="PANTHER" id="PTHR12220">
    <property type="entry name" value="50S/60S RIBOSOMAL PROTEIN L16"/>
    <property type="match status" value="1"/>
</dbReference>
<dbReference type="PANTHER" id="PTHR12220:SF13">
    <property type="entry name" value="LARGE RIBOSOMAL SUBUNIT PROTEIN UL16M"/>
    <property type="match status" value="1"/>
</dbReference>
<dbReference type="Pfam" id="PF00252">
    <property type="entry name" value="Ribosomal_L16"/>
    <property type="match status" value="1"/>
</dbReference>
<dbReference type="PRINTS" id="PR00060">
    <property type="entry name" value="RIBOSOMALL16"/>
</dbReference>
<dbReference type="SUPFAM" id="SSF54686">
    <property type="entry name" value="Ribosomal protein L16p/L10e"/>
    <property type="match status" value="1"/>
</dbReference>
<dbReference type="PROSITE" id="PS00586">
    <property type="entry name" value="RIBOSOMAL_L16_1"/>
    <property type="match status" value="1"/>
</dbReference>
<dbReference type="PROSITE" id="PS00701">
    <property type="entry name" value="RIBOSOMAL_L16_2"/>
    <property type="match status" value="1"/>
</dbReference>
<name>RL16_CALS8</name>
<reference key="1">
    <citation type="submission" date="2007-04" db="EMBL/GenBank/DDBJ databases">
        <title>Genome sequence of the thermophilic hydrogen-producing bacterium Caldicellulosiruptor saccharolyticus DSM 8903.</title>
        <authorList>
            <person name="Copeland A."/>
            <person name="Lucas S."/>
            <person name="Lapidus A."/>
            <person name="Barry K."/>
            <person name="Detter J.C."/>
            <person name="Glavina del Rio T."/>
            <person name="Hammon N."/>
            <person name="Israni S."/>
            <person name="Dalin E."/>
            <person name="Tice H."/>
            <person name="Pitluck S."/>
            <person name="Kiss H."/>
            <person name="Brettin T."/>
            <person name="Bruce D."/>
            <person name="Han C."/>
            <person name="Schmutz J."/>
            <person name="Larimer F."/>
            <person name="Land M."/>
            <person name="Hauser L."/>
            <person name="Kyrpides N."/>
            <person name="Lykidis A."/>
            <person name="van de Werken H.J.G."/>
            <person name="Verhaart M.R.A."/>
            <person name="VanFossen A.L."/>
            <person name="Lewis D.L."/>
            <person name="Nichols J.D."/>
            <person name="Goorissen H.P."/>
            <person name="van Niel E.W.J."/>
            <person name="Stams F.J.M."/>
            <person name="Willquist K.U."/>
            <person name="Ward D.E."/>
            <person name="van der Oost J."/>
            <person name="Kelly R.M."/>
            <person name="Kengen S.M.W."/>
            <person name="Richardson P."/>
        </authorList>
    </citation>
    <scope>NUCLEOTIDE SEQUENCE [LARGE SCALE GENOMIC DNA]</scope>
    <source>
        <strain>ATCC 43494 / DSM 8903 / Tp8T 6331</strain>
    </source>
</reference>
<protein>
    <recommendedName>
        <fullName evidence="1">Large ribosomal subunit protein uL16</fullName>
    </recommendedName>
    <alternativeName>
        <fullName evidence="2">50S ribosomal protein L16</fullName>
    </alternativeName>
</protein>
<accession>A4XLS3</accession>
<proteinExistence type="inferred from homology"/>
<comment type="function">
    <text evidence="1">Binds 23S rRNA and is also seen to make contacts with the A and possibly P site tRNAs.</text>
</comment>
<comment type="subunit">
    <text evidence="1">Part of the 50S ribosomal subunit.</text>
</comment>
<comment type="similarity">
    <text evidence="1">Belongs to the universal ribosomal protein uL16 family.</text>
</comment>
<keyword id="KW-0687">Ribonucleoprotein</keyword>
<keyword id="KW-0689">Ribosomal protein</keyword>
<keyword id="KW-0694">RNA-binding</keyword>
<keyword id="KW-0699">rRNA-binding</keyword>
<keyword id="KW-0820">tRNA-binding</keyword>
<sequence>MLMPKRVKYRKQQRGRMKGKATRGNFVAYGDFGIMALEPGWITSNQIEAARVAIARHIKRGGKVWIKIFPDKPVTRKPAETRMGSGKGSPEYWVAVVKPGRVMFEVGGVDKEVAKEALRLAIHKLPIKCKIVSRQDVEMGGEVNEGV</sequence>